<reference key="1">
    <citation type="submission" date="2001-09" db="EMBL/GenBank/DDBJ databases">
        <title>Characterisation of a TGIF-like protein gene in the human Xq21.3-Yp11.2 homology block.</title>
        <authorList>
            <person name="Blanco-Arias P."/>
        </authorList>
    </citation>
    <scope>NUCLEOTIDE SEQUENCE [MRNA]</scope>
</reference>
<protein>
    <recommendedName>
        <fullName>Homeobox protein TGIF2LX</fullName>
    </recommendedName>
    <alternativeName>
        <fullName>TGF-beta-induced transcription factor 2-like protein</fullName>
    </alternativeName>
    <alternativeName>
        <fullName>TGFB-induced factor 2-like protein, X-linked</fullName>
    </alternativeName>
    <alternativeName>
        <fullName>TGIF-like on the X</fullName>
    </alternativeName>
</protein>
<sequence length="256" mass="28559">MEAAADSPAETRSRVEKDSRRVEKDSRRPKKDSPAKTQSPAQDTSIMLRNNADTGKVLALPEHKKKRKGYLPAESVKILRRWMYKHRFRAYPSEAEKRMLSKKTNLSLSQISNWFINARRRILPDMLQRRGNDRIVGHKTGKDANATHLQSTDASVPAKSGPRGSDNVQSLPLRSSPKGQMSGEKIPEPGSAPSQKLTMIAQPKKKVKVSNITSSSSPEPVSTEEYADFSSFQLLVDAAVQRAAELELEKKQESNP</sequence>
<name>TF2LX_PAPHA</name>
<keyword id="KW-0238">DNA-binding</keyword>
<keyword id="KW-0371">Homeobox</keyword>
<keyword id="KW-0539">Nucleus</keyword>
<keyword id="KW-0804">Transcription</keyword>
<keyword id="KW-0805">Transcription regulation</keyword>
<gene>
    <name type="primary">TGIF2LX</name>
    <name type="synonym">TGIFLX</name>
</gene>
<dbReference type="EMBL" id="AJ345080">
    <property type="protein sequence ID" value="CAC87902.2"/>
    <property type="molecule type" value="mRNA"/>
</dbReference>
<dbReference type="SMR" id="Q8MIC2"/>
<dbReference type="GO" id="GO:0005634">
    <property type="term" value="C:nucleus"/>
    <property type="evidence" value="ECO:0007669"/>
    <property type="project" value="UniProtKB-SubCell"/>
</dbReference>
<dbReference type="GO" id="GO:0003677">
    <property type="term" value="F:DNA binding"/>
    <property type="evidence" value="ECO:0007669"/>
    <property type="project" value="UniProtKB-KW"/>
</dbReference>
<dbReference type="GO" id="GO:0006355">
    <property type="term" value="P:regulation of DNA-templated transcription"/>
    <property type="evidence" value="ECO:0007669"/>
    <property type="project" value="InterPro"/>
</dbReference>
<dbReference type="CDD" id="cd00086">
    <property type="entry name" value="homeodomain"/>
    <property type="match status" value="1"/>
</dbReference>
<dbReference type="FunFam" id="1.10.10.60:FF:000059">
    <property type="entry name" value="TGFB-induced factor homeobox 1"/>
    <property type="match status" value="1"/>
</dbReference>
<dbReference type="Gene3D" id="1.10.10.60">
    <property type="entry name" value="Homeodomain-like"/>
    <property type="match status" value="1"/>
</dbReference>
<dbReference type="InterPro" id="IPR001356">
    <property type="entry name" value="HD"/>
</dbReference>
<dbReference type="InterPro" id="IPR009057">
    <property type="entry name" value="Homeodomain-like_sf"/>
</dbReference>
<dbReference type="InterPro" id="IPR008422">
    <property type="entry name" value="KN_HD"/>
</dbReference>
<dbReference type="InterPro" id="IPR050224">
    <property type="entry name" value="TALE_homeobox"/>
</dbReference>
<dbReference type="PANTHER" id="PTHR11850">
    <property type="entry name" value="HOMEOBOX PROTEIN TRANSCRIPTION FACTORS"/>
    <property type="match status" value="1"/>
</dbReference>
<dbReference type="Pfam" id="PF05920">
    <property type="entry name" value="Homeobox_KN"/>
    <property type="match status" value="1"/>
</dbReference>
<dbReference type="SMART" id="SM00389">
    <property type="entry name" value="HOX"/>
    <property type="match status" value="1"/>
</dbReference>
<dbReference type="SUPFAM" id="SSF46689">
    <property type="entry name" value="Homeodomain-like"/>
    <property type="match status" value="1"/>
</dbReference>
<dbReference type="PROSITE" id="PS50071">
    <property type="entry name" value="HOMEOBOX_2"/>
    <property type="match status" value="1"/>
</dbReference>
<organism>
    <name type="scientific">Papio hamadryas</name>
    <name type="common">Hamadryas baboon</name>
    <dbReference type="NCBI Taxonomy" id="9557"/>
    <lineage>
        <taxon>Eukaryota</taxon>
        <taxon>Metazoa</taxon>
        <taxon>Chordata</taxon>
        <taxon>Craniata</taxon>
        <taxon>Vertebrata</taxon>
        <taxon>Euteleostomi</taxon>
        <taxon>Mammalia</taxon>
        <taxon>Eutheria</taxon>
        <taxon>Euarchontoglires</taxon>
        <taxon>Primates</taxon>
        <taxon>Haplorrhini</taxon>
        <taxon>Catarrhini</taxon>
        <taxon>Cercopithecidae</taxon>
        <taxon>Cercopithecinae</taxon>
        <taxon>Papio</taxon>
    </lineage>
</organism>
<evidence type="ECO:0000250" key="1"/>
<evidence type="ECO:0000255" key="2">
    <source>
        <dbReference type="PROSITE-ProRule" id="PRU00108"/>
    </source>
</evidence>
<evidence type="ECO:0000256" key="3">
    <source>
        <dbReference type="SAM" id="MobiDB-lite"/>
    </source>
</evidence>
<evidence type="ECO:0000305" key="4"/>
<accession>Q8MIC2</accession>
<proteinExistence type="evidence at transcript level"/>
<comment type="function">
    <text evidence="1">May have a transcription role in testis.</text>
</comment>
<comment type="subcellular location">
    <subcellularLocation>
        <location evidence="2">Nucleus</location>
    </subcellularLocation>
</comment>
<comment type="similarity">
    <text evidence="4">Belongs to the TALE/TGIF homeobox family.</text>
</comment>
<feature type="chain" id="PRO_0000049330" description="Homeobox protein TGIF2LX">
    <location>
        <begin position="1"/>
        <end position="256"/>
    </location>
</feature>
<feature type="DNA-binding region" description="Homeobox; TALE-type" evidence="2">
    <location>
        <begin position="62"/>
        <end position="125"/>
    </location>
</feature>
<feature type="region of interest" description="Disordered" evidence="3">
    <location>
        <begin position="1"/>
        <end position="45"/>
    </location>
</feature>
<feature type="region of interest" description="Disordered" evidence="3">
    <location>
        <begin position="136"/>
        <end position="224"/>
    </location>
</feature>
<feature type="compositionally biased region" description="Basic and acidic residues" evidence="3">
    <location>
        <begin position="9"/>
        <end position="34"/>
    </location>
</feature>
<feature type="compositionally biased region" description="Polar residues" evidence="3">
    <location>
        <begin position="35"/>
        <end position="45"/>
    </location>
</feature>
<feature type="compositionally biased region" description="Polar residues" evidence="3">
    <location>
        <begin position="166"/>
        <end position="179"/>
    </location>
</feature>
<feature type="compositionally biased region" description="Low complexity" evidence="3">
    <location>
        <begin position="209"/>
        <end position="224"/>
    </location>
</feature>